<evidence type="ECO:0000255" key="1">
    <source>
        <dbReference type="HAMAP-Rule" id="MF_00612"/>
    </source>
</evidence>
<dbReference type="EMBL" id="FM209186">
    <property type="protein sequence ID" value="CAW29039.1"/>
    <property type="molecule type" value="Genomic_DNA"/>
</dbReference>
<dbReference type="RefSeq" id="WP_003082003.1">
    <property type="nucleotide sequence ID" value="NC_011770.1"/>
</dbReference>
<dbReference type="SMR" id="B7UXF2"/>
<dbReference type="KEGG" id="pag:PLES_42841"/>
<dbReference type="HOGENOM" id="CLU_099590_0_1_6"/>
<dbReference type="Gene3D" id="3.10.450.50">
    <property type="match status" value="1"/>
</dbReference>
<dbReference type="HAMAP" id="MF_00612">
    <property type="entry name" value="UPF0225"/>
    <property type="match status" value="1"/>
</dbReference>
<dbReference type="InterPro" id="IPR032710">
    <property type="entry name" value="NTF2-like_dom_sf"/>
</dbReference>
<dbReference type="InterPro" id="IPR004027">
    <property type="entry name" value="SEC_C_motif"/>
</dbReference>
<dbReference type="InterPro" id="IPR023006">
    <property type="entry name" value="UPF0225"/>
</dbReference>
<dbReference type="InterPro" id="IPR048469">
    <property type="entry name" value="YchJ-like_M"/>
</dbReference>
<dbReference type="NCBIfam" id="NF001213">
    <property type="entry name" value="PRK00183.1"/>
    <property type="match status" value="1"/>
</dbReference>
<dbReference type="NCBIfam" id="NF002486">
    <property type="entry name" value="PRK01752.1"/>
    <property type="match status" value="1"/>
</dbReference>
<dbReference type="PANTHER" id="PTHR33747:SF1">
    <property type="entry name" value="ADENYLATE CYCLASE-ASSOCIATED CAP C-TERMINAL DOMAIN-CONTAINING PROTEIN"/>
    <property type="match status" value="1"/>
</dbReference>
<dbReference type="PANTHER" id="PTHR33747">
    <property type="entry name" value="UPF0225 PROTEIN SCO1677"/>
    <property type="match status" value="1"/>
</dbReference>
<dbReference type="Pfam" id="PF02810">
    <property type="entry name" value="SEC-C"/>
    <property type="match status" value="2"/>
</dbReference>
<dbReference type="Pfam" id="PF17775">
    <property type="entry name" value="YchJ_M-like"/>
    <property type="match status" value="1"/>
</dbReference>
<dbReference type="SUPFAM" id="SSF54427">
    <property type="entry name" value="NTF2-like"/>
    <property type="match status" value="1"/>
</dbReference>
<dbReference type="SUPFAM" id="SSF103642">
    <property type="entry name" value="Sec-C motif"/>
    <property type="match status" value="1"/>
</dbReference>
<name>Y4284_PSEA8</name>
<protein>
    <recommendedName>
        <fullName evidence="1">UPF0225 protein PLES_42841</fullName>
    </recommendedName>
</protein>
<accession>B7UXF2</accession>
<feature type="chain" id="PRO_1000130390" description="UPF0225 protein PLES_42841">
    <location>
        <begin position="1"/>
        <end position="157"/>
    </location>
</feature>
<reference key="1">
    <citation type="journal article" date="2009" name="Genome Res.">
        <title>Newly introduced genomic prophage islands are critical determinants of in vivo competitiveness in the Liverpool epidemic strain of Pseudomonas aeruginosa.</title>
        <authorList>
            <person name="Winstanley C."/>
            <person name="Langille M.G.I."/>
            <person name="Fothergill J.L."/>
            <person name="Kukavica-Ibrulj I."/>
            <person name="Paradis-Bleau C."/>
            <person name="Sanschagrin F."/>
            <person name="Thomson N.R."/>
            <person name="Winsor G.L."/>
            <person name="Quail M.A."/>
            <person name="Lennard N."/>
            <person name="Bignell A."/>
            <person name="Clarke L."/>
            <person name="Seeger K."/>
            <person name="Saunders D."/>
            <person name="Harris D."/>
            <person name="Parkhill J."/>
            <person name="Hancock R.E.W."/>
            <person name="Brinkman F.S.L."/>
            <person name="Levesque R.C."/>
        </authorList>
    </citation>
    <scope>NUCLEOTIDE SEQUENCE [LARGE SCALE GENOMIC DNA]</scope>
    <source>
        <strain>LESB58</strain>
    </source>
</reference>
<sequence>MTQPSCPCGSGDPLDDCCGRYHQGHPAPTAEALMRSRYSAYALGLVDYLRDTTLPAQQAGLDLDGIRAWSHGSTWLGLEVENHEVLGGQPEHARVTFVARWHDADGEHAHRECSGFVQRNGRWYFLDPTVALKLGRNDPCPCGAGGKLKKCCGPWIT</sequence>
<gene>
    <name type="ordered locus">PLES_42841</name>
</gene>
<comment type="similarity">
    <text evidence="1">Belongs to the UPF0225 family.</text>
</comment>
<proteinExistence type="inferred from homology"/>
<organism>
    <name type="scientific">Pseudomonas aeruginosa (strain LESB58)</name>
    <dbReference type="NCBI Taxonomy" id="557722"/>
    <lineage>
        <taxon>Bacteria</taxon>
        <taxon>Pseudomonadati</taxon>
        <taxon>Pseudomonadota</taxon>
        <taxon>Gammaproteobacteria</taxon>
        <taxon>Pseudomonadales</taxon>
        <taxon>Pseudomonadaceae</taxon>
        <taxon>Pseudomonas</taxon>
    </lineage>
</organism>